<keyword id="KW-0240">DNA-directed RNA polymerase</keyword>
<keyword id="KW-0548">Nucleotidyltransferase</keyword>
<keyword id="KW-1185">Reference proteome</keyword>
<keyword id="KW-0804">Transcription</keyword>
<keyword id="KW-0808">Transferase</keyword>
<accession>Q7VQC3</accession>
<reference key="1">
    <citation type="journal article" date="2003" name="Proc. Natl. Acad. Sci. U.S.A.">
        <title>The genome sequence of Blochmannia floridanus: comparative analysis of reduced genomes.</title>
        <authorList>
            <person name="Gil R."/>
            <person name="Silva F.J."/>
            <person name="Zientz E."/>
            <person name="Delmotte F."/>
            <person name="Gonzalez-Candelas F."/>
            <person name="Latorre A."/>
            <person name="Rausell C."/>
            <person name="Kamerbeek J."/>
            <person name="Gadau J."/>
            <person name="Hoelldobler B."/>
            <person name="van Ham R.C.H.J."/>
            <person name="Gross R."/>
            <person name="Moya A."/>
        </authorList>
    </citation>
    <scope>NUCLEOTIDE SEQUENCE [LARGE SCALE GENOMIC DNA]</scope>
</reference>
<sequence length="331" mass="37158">MQSFEKEFLKPRSINIEKISEIHSKITLEPLERGFGHTLGNALRRILLSSMPGCAITEVEIEGVLHEYGTKEGVREDVLEILLNLKTLAINMYVKDSIVLTLKKTGIGPVIASDIEYDSSIISIVNPNHIICCITDQDTSIIMRIKVQRGRGYVPAFSRFSSDDQHDLPIGRLLLDACYSPVERISYTVEAARVEKRTDLDKLIIDMETNGTIDPEEAIRRAATILSDQLSSFIDLKDVHQPEVKEEKPEFDPSLLNLVDDLELTVRSANCLKAESIHYIGDLVQKTEVELLKTPNLGKKSLTEIKDVLASRGLSLGMRLDNWPPKHLSEQ</sequence>
<dbReference type="EC" id="2.7.7.6" evidence="1"/>
<dbReference type="EMBL" id="BX248583">
    <property type="protein sequence ID" value="CAD83731.1"/>
    <property type="molecule type" value="Genomic_DNA"/>
</dbReference>
<dbReference type="SMR" id="Q7VQC3"/>
<dbReference type="STRING" id="203907.Bfl216"/>
<dbReference type="KEGG" id="bfl:Bfl216"/>
<dbReference type="eggNOG" id="COG0202">
    <property type="taxonomic scope" value="Bacteria"/>
</dbReference>
<dbReference type="HOGENOM" id="CLU_053084_0_0_6"/>
<dbReference type="OrthoDB" id="9805706at2"/>
<dbReference type="Proteomes" id="UP000002192">
    <property type="component" value="Chromosome"/>
</dbReference>
<dbReference type="GO" id="GO:0005737">
    <property type="term" value="C:cytoplasm"/>
    <property type="evidence" value="ECO:0007669"/>
    <property type="project" value="UniProtKB-ARBA"/>
</dbReference>
<dbReference type="GO" id="GO:0000428">
    <property type="term" value="C:DNA-directed RNA polymerase complex"/>
    <property type="evidence" value="ECO:0007669"/>
    <property type="project" value="UniProtKB-KW"/>
</dbReference>
<dbReference type="GO" id="GO:0003677">
    <property type="term" value="F:DNA binding"/>
    <property type="evidence" value="ECO:0007669"/>
    <property type="project" value="UniProtKB-UniRule"/>
</dbReference>
<dbReference type="GO" id="GO:0003899">
    <property type="term" value="F:DNA-directed RNA polymerase activity"/>
    <property type="evidence" value="ECO:0007669"/>
    <property type="project" value="UniProtKB-UniRule"/>
</dbReference>
<dbReference type="GO" id="GO:0046983">
    <property type="term" value="F:protein dimerization activity"/>
    <property type="evidence" value="ECO:0007669"/>
    <property type="project" value="InterPro"/>
</dbReference>
<dbReference type="GO" id="GO:0006351">
    <property type="term" value="P:DNA-templated transcription"/>
    <property type="evidence" value="ECO:0007669"/>
    <property type="project" value="UniProtKB-UniRule"/>
</dbReference>
<dbReference type="CDD" id="cd06928">
    <property type="entry name" value="RNAP_alpha_NTD"/>
    <property type="match status" value="1"/>
</dbReference>
<dbReference type="FunFam" id="1.10.150.20:FF:000001">
    <property type="entry name" value="DNA-directed RNA polymerase subunit alpha"/>
    <property type="match status" value="1"/>
</dbReference>
<dbReference type="FunFam" id="2.170.120.12:FF:000001">
    <property type="entry name" value="DNA-directed RNA polymerase subunit alpha"/>
    <property type="match status" value="1"/>
</dbReference>
<dbReference type="Gene3D" id="1.10.150.20">
    <property type="entry name" value="5' to 3' exonuclease, C-terminal subdomain"/>
    <property type="match status" value="1"/>
</dbReference>
<dbReference type="Gene3D" id="2.170.120.12">
    <property type="entry name" value="DNA-directed RNA polymerase, insert domain"/>
    <property type="match status" value="1"/>
</dbReference>
<dbReference type="Gene3D" id="3.30.1360.10">
    <property type="entry name" value="RNA polymerase, RBP11-like subunit"/>
    <property type="match status" value="1"/>
</dbReference>
<dbReference type="HAMAP" id="MF_00059">
    <property type="entry name" value="RNApol_bact_RpoA"/>
    <property type="match status" value="1"/>
</dbReference>
<dbReference type="InterPro" id="IPR011262">
    <property type="entry name" value="DNA-dir_RNA_pol_insert"/>
</dbReference>
<dbReference type="InterPro" id="IPR011263">
    <property type="entry name" value="DNA-dir_RNA_pol_RpoA/D/Rpb3"/>
</dbReference>
<dbReference type="InterPro" id="IPR011773">
    <property type="entry name" value="DNA-dir_RpoA"/>
</dbReference>
<dbReference type="InterPro" id="IPR036603">
    <property type="entry name" value="RBP11-like"/>
</dbReference>
<dbReference type="InterPro" id="IPR011260">
    <property type="entry name" value="RNAP_asu_C"/>
</dbReference>
<dbReference type="InterPro" id="IPR036643">
    <property type="entry name" value="RNApol_insert_sf"/>
</dbReference>
<dbReference type="NCBIfam" id="NF003513">
    <property type="entry name" value="PRK05182.1-2"/>
    <property type="match status" value="1"/>
</dbReference>
<dbReference type="NCBIfam" id="NF003519">
    <property type="entry name" value="PRK05182.2-5"/>
    <property type="match status" value="1"/>
</dbReference>
<dbReference type="NCBIfam" id="TIGR02027">
    <property type="entry name" value="rpoA"/>
    <property type="match status" value="1"/>
</dbReference>
<dbReference type="Pfam" id="PF01000">
    <property type="entry name" value="RNA_pol_A_bac"/>
    <property type="match status" value="1"/>
</dbReference>
<dbReference type="Pfam" id="PF03118">
    <property type="entry name" value="RNA_pol_A_CTD"/>
    <property type="match status" value="1"/>
</dbReference>
<dbReference type="Pfam" id="PF01193">
    <property type="entry name" value="RNA_pol_L"/>
    <property type="match status" value="1"/>
</dbReference>
<dbReference type="SMART" id="SM00662">
    <property type="entry name" value="RPOLD"/>
    <property type="match status" value="1"/>
</dbReference>
<dbReference type="SUPFAM" id="SSF47789">
    <property type="entry name" value="C-terminal domain of RNA polymerase alpha subunit"/>
    <property type="match status" value="1"/>
</dbReference>
<dbReference type="SUPFAM" id="SSF56553">
    <property type="entry name" value="Insert subdomain of RNA polymerase alpha subunit"/>
    <property type="match status" value="1"/>
</dbReference>
<dbReference type="SUPFAM" id="SSF55257">
    <property type="entry name" value="RBP11-like subunits of RNA polymerase"/>
    <property type="match status" value="1"/>
</dbReference>
<feature type="chain" id="PRO_0000175286" description="DNA-directed RNA polymerase subunit alpha">
    <location>
        <begin position="1"/>
        <end position="331"/>
    </location>
</feature>
<feature type="region of interest" description="Alpha N-terminal domain (alpha-NTD)" evidence="1">
    <location>
        <begin position="1"/>
        <end position="237"/>
    </location>
</feature>
<feature type="region of interest" description="Alpha C-terminal domain (alpha-CTD)" evidence="1">
    <location>
        <begin position="251"/>
        <end position="331"/>
    </location>
</feature>
<evidence type="ECO:0000255" key="1">
    <source>
        <dbReference type="HAMAP-Rule" id="MF_00059"/>
    </source>
</evidence>
<gene>
    <name evidence="1" type="primary">rpoA</name>
    <name type="ordered locus">Bfl216</name>
</gene>
<organism>
    <name type="scientific">Blochmanniella floridana</name>
    <dbReference type="NCBI Taxonomy" id="203907"/>
    <lineage>
        <taxon>Bacteria</taxon>
        <taxon>Pseudomonadati</taxon>
        <taxon>Pseudomonadota</taxon>
        <taxon>Gammaproteobacteria</taxon>
        <taxon>Enterobacterales</taxon>
        <taxon>Enterobacteriaceae</taxon>
        <taxon>ant endosymbionts</taxon>
        <taxon>Candidatus Blochmanniella</taxon>
    </lineage>
</organism>
<name>RPOA_BLOFL</name>
<proteinExistence type="inferred from homology"/>
<protein>
    <recommendedName>
        <fullName evidence="1">DNA-directed RNA polymerase subunit alpha</fullName>
        <shortName evidence="1">RNAP subunit alpha</shortName>
        <ecNumber evidence="1">2.7.7.6</ecNumber>
    </recommendedName>
    <alternativeName>
        <fullName evidence="1">RNA polymerase subunit alpha</fullName>
    </alternativeName>
    <alternativeName>
        <fullName evidence="1">Transcriptase subunit alpha</fullName>
    </alternativeName>
</protein>
<comment type="function">
    <text evidence="1">DNA-dependent RNA polymerase catalyzes the transcription of DNA into RNA using the four ribonucleoside triphosphates as substrates.</text>
</comment>
<comment type="catalytic activity">
    <reaction evidence="1">
        <text>RNA(n) + a ribonucleoside 5'-triphosphate = RNA(n+1) + diphosphate</text>
        <dbReference type="Rhea" id="RHEA:21248"/>
        <dbReference type="Rhea" id="RHEA-COMP:14527"/>
        <dbReference type="Rhea" id="RHEA-COMP:17342"/>
        <dbReference type="ChEBI" id="CHEBI:33019"/>
        <dbReference type="ChEBI" id="CHEBI:61557"/>
        <dbReference type="ChEBI" id="CHEBI:140395"/>
        <dbReference type="EC" id="2.7.7.6"/>
    </reaction>
</comment>
<comment type="subunit">
    <text evidence="1">Homodimer. The RNAP catalytic core consists of 2 alpha, 1 beta, 1 beta' and 1 omega subunit. When a sigma factor is associated with the core the holoenzyme is formed, which can initiate transcription.</text>
</comment>
<comment type="domain">
    <text evidence="1">The N-terminal domain is essential for RNAP assembly and basal transcription, whereas the C-terminal domain is involved in interaction with transcriptional regulators and with upstream promoter elements.</text>
</comment>
<comment type="similarity">
    <text evidence="1">Belongs to the RNA polymerase alpha chain family.</text>
</comment>